<protein>
    <recommendedName>
        <fullName>Uncharacterized WD repeat-containing protein C227.12</fullName>
    </recommendedName>
</protein>
<feature type="chain" id="PRO_0000316560" description="Uncharacterized WD repeat-containing protein C227.12">
    <location>
        <begin position="1"/>
        <end position="462"/>
    </location>
</feature>
<feature type="repeat" description="WD 1">
    <location>
        <begin position="170"/>
        <end position="209"/>
    </location>
</feature>
<feature type="repeat" description="WD 2">
    <location>
        <begin position="212"/>
        <end position="260"/>
    </location>
</feature>
<feature type="repeat" description="WD 3">
    <location>
        <begin position="263"/>
        <end position="302"/>
    </location>
</feature>
<feature type="repeat" description="WD 4">
    <location>
        <begin position="305"/>
        <end position="344"/>
    </location>
</feature>
<feature type="repeat" description="WD 5">
    <location>
        <begin position="347"/>
        <end position="386"/>
    </location>
</feature>
<feature type="repeat" description="WD 6">
    <location>
        <begin position="389"/>
        <end position="430"/>
    </location>
</feature>
<feature type="repeat" description="WD 7">
    <location>
        <begin position="433"/>
        <end position="462"/>
    </location>
</feature>
<evidence type="ECO:0000269" key="1">
    <source>
    </source>
</evidence>
<dbReference type="EMBL" id="CU329670">
    <property type="protein sequence ID" value="CAB61461.1"/>
    <property type="molecule type" value="Genomic_DNA"/>
</dbReference>
<dbReference type="PIR" id="T50168">
    <property type="entry name" value="T50168"/>
</dbReference>
<dbReference type="SMR" id="Q9UTC7"/>
<dbReference type="BioGRID" id="277979">
    <property type="interactions" value="3"/>
</dbReference>
<dbReference type="FunCoup" id="Q9UTC7">
    <property type="interactions" value="117"/>
</dbReference>
<dbReference type="IntAct" id="Q9UTC7">
    <property type="interactions" value="1"/>
</dbReference>
<dbReference type="STRING" id="284812.Q9UTC7"/>
<dbReference type="PaxDb" id="4896-SPAC227.12.1"/>
<dbReference type="EnsemblFungi" id="SPAC227.12.1">
    <property type="protein sequence ID" value="SPAC227.12.1:pep"/>
    <property type="gene ID" value="SPAC227.12"/>
</dbReference>
<dbReference type="KEGG" id="spo:2541477"/>
<dbReference type="PomBase" id="SPAC227.12"/>
<dbReference type="VEuPathDB" id="FungiDB:SPAC227.12"/>
<dbReference type="eggNOG" id="KOG0272">
    <property type="taxonomic scope" value="Eukaryota"/>
</dbReference>
<dbReference type="HOGENOM" id="CLU_000288_57_20_1"/>
<dbReference type="InParanoid" id="Q9UTC7"/>
<dbReference type="OMA" id="LNEPICY"/>
<dbReference type="PhylomeDB" id="Q9UTC7"/>
<dbReference type="PRO" id="PR:Q9UTC7"/>
<dbReference type="Proteomes" id="UP000002485">
    <property type="component" value="Chromosome I"/>
</dbReference>
<dbReference type="GO" id="GO:0005829">
    <property type="term" value="C:cytosol"/>
    <property type="evidence" value="ECO:0007005"/>
    <property type="project" value="PomBase"/>
</dbReference>
<dbReference type="GO" id="GO:0046540">
    <property type="term" value="C:U4/U6 x U5 tri-snRNP complex"/>
    <property type="evidence" value="ECO:0000314"/>
    <property type="project" value="PomBase"/>
</dbReference>
<dbReference type="GO" id="GO:0030621">
    <property type="term" value="F:U4 snRNA binding"/>
    <property type="evidence" value="ECO:0000318"/>
    <property type="project" value="GO_Central"/>
</dbReference>
<dbReference type="GO" id="GO:0017070">
    <property type="term" value="F:U6 snRNA binding"/>
    <property type="evidence" value="ECO:0000318"/>
    <property type="project" value="GO_Central"/>
</dbReference>
<dbReference type="GO" id="GO:0045292">
    <property type="term" value="P:mRNA cis splicing, via spliceosome"/>
    <property type="evidence" value="ECO:0000269"/>
    <property type="project" value="PomBase"/>
</dbReference>
<dbReference type="GO" id="GO:0000398">
    <property type="term" value="P:mRNA splicing, via spliceosome"/>
    <property type="evidence" value="ECO:0000318"/>
    <property type="project" value="GO_Central"/>
</dbReference>
<dbReference type="CDD" id="cd00200">
    <property type="entry name" value="WD40"/>
    <property type="match status" value="1"/>
</dbReference>
<dbReference type="FunFam" id="2.130.10.10:FF:000411">
    <property type="entry name" value="U4/U6 small nuclear ribonucleoprotein Prp4"/>
    <property type="match status" value="1"/>
</dbReference>
<dbReference type="FunFam" id="4.10.280.110:FF:000015">
    <property type="entry name" value="WD40-repeat-containing domain protein"/>
    <property type="match status" value="1"/>
</dbReference>
<dbReference type="Gene3D" id="4.10.280.110">
    <property type="entry name" value="Pre-mRNA processing factor 4 domain"/>
    <property type="match status" value="1"/>
</dbReference>
<dbReference type="Gene3D" id="2.130.10.10">
    <property type="entry name" value="YVTN repeat-like/Quinoprotein amine dehydrogenase"/>
    <property type="match status" value="3"/>
</dbReference>
<dbReference type="InterPro" id="IPR020472">
    <property type="entry name" value="G-protein_beta_WD-40_rep"/>
</dbReference>
<dbReference type="InterPro" id="IPR014906">
    <property type="entry name" value="PRP4-like"/>
</dbReference>
<dbReference type="InterPro" id="IPR036285">
    <property type="entry name" value="PRP4-like_sf"/>
</dbReference>
<dbReference type="InterPro" id="IPR015943">
    <property type="entry name" value="WD40/YVTN_repeat-like_dom_sf"/>
</dbReference>
<dbReference type="InterPro" id="IPR019775">
    <property type="entry name" value="WD40_repeat_CS"/>
</dbReference>
<dbReference type="InterPro" id="IPR036322">
    <property type="entry name" value="WD40_repeat_dom_sf"/>
</dbReference>
<dbReference type="InterPro" id="IPR001680">
    <property type="entry name" value="WD40_rpt"/>
</dbReference>
<dbReference type="PANTHER" id="PTHR19846:SF0">
    <property type="entry name" value="PRE-MRNA PROCESSING FACTOR 4"/>
    <property type="match status" value="1"/>
</dbReference>
<dbReference type="PANTHER" id="PTHR19846">
    <property type="entry name" value="WD40 REPEAT PROTEIN"/>
    <property type="match status" value="1"/>
</dbReference>
<dbReference type="Pfam" id="PF08799">
    <property type="entry name" value="PRP4"/>
    <property type="match status" value="1"/>
</dbReference>
<dbReference type="Pfam" id="PF00400">
    <property type="entry name" value="WD40"/>
    <property type="match status" value="7"/>
</dbReference>
<dbReference type="PRINTS" id="PR00320">
    <property type="entry name" value="GPROTEINBRPT"/>
</dbReference>
<dbReference type="SMART" id="SM00500">
    <property type="entry name" value="SFM"/>
    <property type="match status" value="1"/>
</dbReference>
<dbReference type="SMART" id="SM00320">
    <property type="entry name" value="WD40"/>
    <property type="match status" value="7"/>
</dbReference>
<dbReference type="SUPFAM" id="SSF158230">
    <property type="entry name" value="PRP4-like"/>
    <property type="match status" value="1"/>
</dbReference>
<dbReference type="SUPFAM" id="SSF50978">
    <property type="entry name" value="WD40 repeat-like"/>
    <property type="match status" value="1"/>
</dbReference>
<dbReference type="PROSITE" id="PS00678">
    <property type="entry name" value="WD_REPEATS_1"/>
    <property type="match status" value="2"/>
</dbReference>
<dbReference type="PROSITE" id="PS50082">
    <property type="entry name" value="WD_REPEATS_2"/>
    <property type="match status" value="6"/>
</dbReference>
<dbReference type="PROSITE" id="PS50294">
    <property type="entry name" value="WD_REPEATS_REGION"/>
    <property type="match status" value="1"/>
</dbReference>
<organism>
    <name type="scientific">Schizosaccharomyces pombe (strain 972 / ATCC 24843)</name>
    <name type="common">Fission yeast</name>
    <dbReference type="NCBI Taxonomy" id="284812"/>
    <lineage>
        <taxon>Eukaryota</taxon>
        <taxon>Fungi</taxon>
        <taxon>Dikarya</taxon>
        <taxon>Ascomycota</taxon>
        <taxon>Taphrinomycotina</taxon>
        <taxon>Schizosaccharomycetes</taxon>
        <taxon>Schizosaccharomycetales</taxon>
        <taxon>Schizosaccharomycetaceae</taxon>
        <taxon>Schizosaccharomyces</taxon>
    </lineage>
</organism>
<keyword id="KW-0963">Cytoplasm</keyword>
<keyword id="KW-1185">Reference proteome</keyword>
<keyword id="KW-0677">Repeat</keyword>
<keyword id="KW-0853">WD repeat</keyword>
<gene>
    <name type="ORF">SPAC227.12</name>
</gene>
<comment type="subcellular location">
    <subcellularLocation>
        <location evidence="1">Cytoplasm</location>
    </subcellularLocation>
</comment>
<sequence>MNENEGISLGELETRPFSEGITRFTKEQAAYYAEQKEKDRIKALKIPYEDSKVREYLRRYGEPITYFGEDALARRQRLQQLMIEKSLEGDNPLDVDQGASENIEKETYVQGSHELLVARKKIALYSLEKAKLRLKKEREISEIPVPEIVLSGKSSIEHLQKAELMGSQIGGERPIAIVRFSNNGNHFASGSWGGQVKVWNSDNLSEVQLFRGHTDRVSGLDWYPLCQAWDADSEQLTLATGAADNTVCLWKASQSTPLLRLEGHLARVGRVAFHPSGDYLVSASFDTTWRLWDVHTGVELLMQEGHSEGIFSIACQPDGSLVSSGGNDAIGRIWDLRSGKSIMVLDEHIRQIVAMAWSPNGYQLATSSADDTVKIWDLRKVSLAHTIPAHSSLVSDVRYIESGVNRFIATSGYDGCVKLWNPLNCSLIKSMVGHEEKVMSVDGYGDRFISSGYDRTIKLWYP</sequence>
<reference key="1">
    <citation type="journal article" date="2002" name="Nature">
        <title>The genome sequence of Schizosaccharomyces pombe.</title>
        <authorList>
            <person name="Wood V."/>
            <person name="Gwilliam R."/>
            <person name="Rajandream M.A."/>
            <person name="Lyne M.H."/>
            <person name="Lyne R."/>
            <person name="Stewart A."/>
            <person name="Sgouros J.G."/>
            <person name="Peat N."/>
            <person name="Hayles J."/>
            <person name="Baker S.G."/>
            <person name="Basham D."/>
            <person name="Bowman S."/>
            <person name="Brooks K."/>
            <person name="Brown D."/>
            <person name="Brown S."/>
            <person name="Chillingworth T."/>
            <person name="Churcher C.M."/>
            <person name="Collins M."/>
            <person name="Connor R."/>
            <person name="Cronin A."/>
            <person name="Davis P."/>
            <person name="Feltwell T."/>
            <person name="Fraser A."/>
            <person name="Gentles S."/>
            <person name="Goble A."/>
            <person name="Hamlin N."/>
            <person name="Harris D.E."/>
            <person name="Hidalgo J."/>
            <person name="Hodgson G."/>
            <person name="Holroyd S."/>
            <person name="Hornsby T."/>
            <person name="Howarth S."/>
            <person name="Huckle E.J."/>
            <person name="Hunt S."/>
            <person name="Jagels K."/>
            <person name="James K.D."/>
            <person name="Jones L."/>
            <person name="Jones M."/>
            <person name="Leather S."/>
            <person name="McDonald S."/>
            <person name="McLean J."/>
            <person name="Mooney P."/>
            <person name="Moule S."/>
            <person name="Mungall K.L."/>
            <person name="Murphy L.D."/>
            <person name="Niblett D."/>
            <person name="Odell C."/>
            <person name="Oliver K."/>
            <person name="O'Neil S."/>
            <person name="Pearson D."/>
            <person name="Quail M.A."/>
            <person name="Rabbinowitsch E."/>
            <person name="Rutherford K.M."/>
            <person name="Rutter S."/>
            <person name="Saunders D."/>
            <person name="Seeger K."/>
            <person name="Sharp S."/>
            <person name="Skelton J."/>
            <person name="Simmonds M.N."/>
            <person name="Squares R."/>
            <person name="Squares S."/>
            <person name="Stevens K."/>
            <person name="Taylor K."/>
            <person name="Taylor R.G."/>
            <person name="Tivey A."/>
            <person name="Walsh S.V."/>
            <person name="Warren T."/>
            <person name="Whitehead S."/>
            <person name="Woodward J.R."/>
            <person name="Volckaert G."/>
            <person name="Aert R."/>
            <person name="Robben J."/>
            <person name="Grymonprez B."/>
            <person name="Weltjens I."/>
            <person name="Vanstreels E."/>
            <person name="Rieger M."/>
            <person name="Schaefer M."/>
            <person name="Mueller-Auer S."/>
            <person name="Gabel C."/>
            <person name="Fuchs M."/>
            <person name="Duesterhoeft A."/>
            <person name="Fritzc C."/>
            <person name="Holzer E."/>
            <person name="Moestl D."/>
            <person name="Hilbert H."/>
            <person name="Borzym K."/>
            <person name="Langer I."/>
            <person name="Beck A."/>
            <person name="Lehrach H."/>
            <person name="Reinhardt R."/>
            <person name="Pohl T.M."/>
            <person name="Eger P."/>
            <person name="Zimmermann W."/>
            <person name="Wedler H."/>
            <person name="Wambutt R."/>
            <person name="Purnelle B."/>
            <person name="Goffeau A."/>
            <person name="Cadieu E."/>
            <person name="Dreano S."/>
            <person name="Gloux S."/>
            <person name="Lelaure V."/>
            <person name="Mottier S."/>
            <person name="Galibert F."/>
            <person name="Aves S.J."/>
            <person name="Xiang Z."/>
            <person name="Hunt C."/>
            <person name="Moore K."/>
            <person name="Hurst S.M."/>
            <person name="Lucas M."/>
            <person name="Rochet M."/>
            <person name="Gaillardin C."/>
            <person name="Tallada V.A."/>
            <person name="Garzon A."/>
            <person name="Thode G."/>
            <person name="Daga R.R."/>
            <person name="Cruzado L."/>
            <person name="Jimenez J."/>
            <person name="Sanchez M."/>
            <person name="del Rey F."/>
            <person name="Benito J."/>
            <person name="Dominguez A."/>
            <person name="Revuelta J.L."/>
            <person name="Moreno S."/>
            <person name="Armstrong J."/>
            <person name="Forsburg S.L."/>
            <person name="Cerutti L."/>
            <person name="Lowe T."/>
            <person name="McCombie W.R."/>
            <person name="Paulsen I."/>
            <person name="Potashkin J."/>
            <person name="Shpakovski G.V."/>
            <person name="Ussery D."/>
            <person name="Barrell B.G."/>
            <person name="Nurse P."/>
        </authorList>
    </citation>
    <scope>NUCLEOTIDE SEQUENCE [LARGE SCALE GENOMIC DNA]</scope>
    <source>
        <strain>972 / ATCC 24843</strain>
    </source>
</reference>
<reference key="2">
    <citation type="journal article" date="2006" name="Nat. Biotechnol.">
        <title>ORFeome cloning and global analysis of protein localization in the fission yeast Schizosaccharomyces pombe.</title>
        <authorList>
            <person name="Matsuyama A."/>
            <person name="Arai R."/>
            <person name="Yashiroda Y."/>
            <person name="Shirai A."/>
            <person name="Kamata A."/>
            <person name="Sekido S."/>
            <person name="Kobayashi Y."/>
            <person name="Hashimoto A."/>
            <person name="Hamamoto M."/>
            <person name="Hiraoka Y."/>
            <person name="Horinouchi S."/>
            <person name="Yoshida M."/>
        </authorList>
    </citation>
    <scope>SUBCELLULAR LOCATION [LARGE SCALE ANALYSIS]</scope>
</reference>
<name>YIDC_SCHPO</name>
<proteinExistence type="predicted"/>
<accession>Q9UTC7</accession>